<comment type="subcellular location">
    <subcellularLocation>
        <location evidence="2">Cell membrane</location>
        <topology evidence="2">Multi-pass membrane protein</topology>
    </subcellularLocation>
</comment>
<name>YKVA_BACSU</name>
<proteinExistence type="predicted"/>
<sequence length="106" mass="12198">MKKKKAIMLGAAGGKAILKRKNRKKCIQHITTFFQMLRDWRNGDYPRSQVKTLLLLTAAILYIVMPLDIIPDVILGLGFIDDAAVLGLIWTLIKKELSQYEKWRLQ</sequence>
<protein>
    <recommendedName>
        <fullName>Uncharacterized membrane protein YkvA</fullName>
    </recommendedName>
</protein>
<feature type="chain" id="PRO_0000388975" description="Uncharacterized membrane protein YkvA">
    <location>
        <begin position="1"/>
        <end position="106"/>
    </location>
</feature>
<feature type="transmembrane region" description="Helical" evidence="1">
    <location>
        <begin position="53"/>
        <end position="70"/>
    </location>
</feature>
<feature type="transmembrane region" description="Helical" evidence="1">
    <location>
        <begin position="74"/>
        <end position="93"/>
    </location>
</feature>
<dbReference type="EMBL" id="AL009126">
    <property type="protein sequence ID" value="CAB13236.1"/>
    <property type="molecule type" value="Genomic_DNA"/>
</dbReference>
<dbReference type="PIR" id="E69867">
    <property type="entry name" value="E69867"/>
</dbReference>
<dbReference type="RefSeq" id="NP_389246.1">
    <property type="nucleotide sequence ID" value="NC_000964.3"/>
</dbReference>
<dbReference type="RefSeq" id="WP_003232481.1">
    <property type="nucleotide sequence ID" value="NZ_OZ025638.1"/>
</dbReference>
<dbReference type="FunCoup" id="O31670">
    <property type="interactions" value="13"/>
</dbReference>
<dbReference type="PaxDb" id="224308-BSU13630"/>
<dbReference type="EnsemblBacteria" id="CAB13236">
    <property type="protein sequence ID" value="CAB13236"/>
    <property type="gene ID" value="BSU_13630"/>
</dbReference>
<dbReference type="GeneID" id="939314"/>
<dbReference type="KEGG" id="bsu:BSU13630"/>
<dbReference type="PATRIC" id="fig|224308.179.peg.1480"/>
<dbReference type="eggNOG" id="COG3339">
    <property type="taxonomic scope" value="Bacteria"/>
</dbReference>
<dbReference type="InParanoid" id="O31670"/>
<dbReference type="OrthoDB" id="9793277at2"/>
<dbReference type="BioCyc" id="BSUB:BSU13630-MONOMER"/>
<dbReference type="Proteomes" id="UP000001570">
    <property type="component" value="Chromosome"/>
</dbReference>
<dbReference type="GO" id="GO:0005886">
    <property type="term" value="C:plasma membrane"/>
    <property type="evidence" value="ECO:0007669"/>
    <property type="project" value="UniProtKB-SubCell"/>
</dbReference>
<dbReference type="InterPro" id="IPR010652">
    <property type="entry name" value="DUF1232"/>
</dbReference>
<dbReference type="Pfam" id="PF06803">
    <property type="entry name" value="DUF1232"/>
    <property type="match status" value="1"/>
</dbReference>
<accession>O31670</accession>
<evidence type="ECO:0000255" key="1"/>
<evidence type="ECO:0000305" key="2"/>
<keyword id="KW-1003">Cell membrane</keyword>
<keyword id="KW-0472">Membrane</keyword>
<keyword id="KW-1185">Reference proteome</keyword>
<keyword id="KW-0812">Transmembrane</keyword>
<keyword id="KW-1133">Transmembrane helix</keyword>
<reference key="1">
    <citation type="journal article" date="1997" name="Nature">
        <title>The complete genome sequence of the Gram-positive bacterium Bacillus subtilis.</title>
        <authorList>
            <person name="Kunst F."/>
            <person name="Ogasawara N."/>
            <person name="Moszer I."/>
            <person name="Albertini A.M."/>
            <person name="Alloni G."/>
            <person name="Azevedo V."/>
            <person name="Bertero M.G."/>
            <person name="Bessieres P."/>
            <person name="Bolotin A."/>
            <person name="Borchert S."/>
            <person name="Borriss R."/>
            <person name="Boursier L."/>
            <person name="Brans A."/>
            <person name="Braun M."/>
            <person name="Brignell S.C."/>
            <person name="Bron S."/>
            <person name="Brouillet S."/>
            <person name="Bruschi C.V."/>
            <person name="Caldwell B."/>
            <person name="Capuano V."/>
            <person name="Carter N.M."/>
            <person name="Choi S.-K."/>
            <person name="Codani J.-J."/>
            <person name="Connerton I.F."/>
            <person name="Cummings N.J."/>
            <person name="Daniel R.A."/>
            <person name="Denizot F."/>
            <person name="Devine K.M."/>
            <person name="Duesterhoeft A."/>
            <person name="Ehrlich S.D."/>
            <person name="Emmerson P.T."/>
            <person name="Entian K.-D."/>
            <person name="Errington J."/>
            <person name="Fabret C."/>
            <person name="Ferrari E."/>
            <person name="Foulger D."/>
            <person name="Fritz C."/>
            <person name="Fujita M."/>
            <person name="Fujita Y."/>
            <person name="Fuma S."/>
            <person name="Galizzi A."/>
            <person name="Galleron N."/>
            <person name="Ghim S.-Y."/>
            <person name="Glaser P."/>
            <person name="Goffeau A."/>
            <person name="Golightly E.J."/>
            <person name="Grandi G."/>
            <person name="Guiseppi G."/>
            <person name="Guy B.J."/>
            <person name="Haga K."/>
            <person name="Haiech J."/>
            <person name="Harwood C.R."/>
            <person name="Henaut A."/>
            <person name="Hilbert H."/>
            <person name="Holsappel S."/>
            <person name="Hosono S."/>
            <person name="Hullo M.-F."/>
            <person name="Itaya M."/>
            <person name="Jones L.-M."/>
            <person name="Joris B."/>
            <person name="Karamata D."/>
            <person name="Kasahara Y."/>
            <person name="Klaerr-Blanchard M."/>
            <person name="Klein C."/>
            <person name="Kobayashi Y."/>
            <person name="Koetter P."/>
            <person name="Koningstein G."/>
            <person name="Krogh S."/>
            <person name="Kumano M."/>
            <person name="Kurita K."/>
            <person name="Lapidus A."/>
            <person name="Lardinois S."/>
            <person name="Lauber J."/>
            <person name="Lazarevic V."/>
            <person name="Lee S.-M."/>
            <person name="Levine A."/>
            <person name="Liu H."/>
            <person name="Masuda S."/>
            <person name="Mauel C."/>
            <person name="Medigue C."/>
            <person name="Medina N."/>
            <person name="Mellado R.P."/>
            <person name="Mizuno M."/>
            <person name="Moestl D."/>
            <person name="Nakai S."/>
            <person name="Noback M."/>
            <person name="Noone D."/>
            <person name="O'Reilly M."/>
            <person name="Ogawa K."/>
            <person name="Ogiwara A."/>
            <person name="Oudega B."/>
            <person name="Park S.-H."/>
            <person name="Parro V."/>
            <person name="Pohl T.M."/>
            <person name="Portetelle D."/>
            <person name="Porwollik S."/>
            <person name="Prescott A.M."/>
            <person name="Presecan E."/>
            <person name="Pujic P."/>
            <person name="Purnelle B."/>
            <person name="Rapoport G."/>
            <person name="Rey M."/>
            <person name="Reynolds S."/>
            <person name="Rieger M."/>
            <person name="Rivolta C."/>
            <person name="Rocha E."/>
            <person name="Roche B."/>
            <person name="Rose M."/>
            <person name="Sadaie Y."/>
            <person name="Sato T."/>
            <person name="Scanlan E."/>
            <person name="Schleich S."/>
            <person name="Schroeter R."/>
            <person name="Scoffone F."/>
            <person name="Sekiguchi J."/>
            <person name="Sekowska A."/>
            <person name="Seror S.J."/>
            <person name="Serror P."/>
            <person name="Shin B.-S."/>
            <person name="Soldo B."/>
            <person name="Sorokin A."/>
            <person name="Tacconi E."/>
            <person name="Takagi T."/>
            <person name="Takahashi H."/>
            <person name="Takemaru K."/>
            <person name="Takeuchi M."/>
            <person name="Tamakoshi A."/>
            <person name="Tanaka T."/>
            <person name="Terpstra P."/>
            <person name="Tognoni A."/>
            <person name="Tosato V."/>
            <person name="Uchiyama S."/>
            <person name="Vandenbol M."/>
            <person name="Vannier F."/>
            <person name="Vassarotti A."/>
            <person name="Viari A."/>
            <person name="Wambutt R."/>
            <person name="Wedler E."/>
            <person name="Wedler H."/>
            <person name="Weitzenegger T."/>
            <person name="Winters P."/>
            <person name="Wipat A."/>
            <person name="Yamamoto H."/>
            <person name="Yamane K."/>
            <person name="Yasumoto K."/>
            <person name="Yata K."/>
            <person name="Yoshida K."/>
            <person name="Yoshikawa H.-F."/>
            <person name="Zumstein E."/>
            <person name="Yoshikawa H."/>
            <person name="Danchin A."/>
        </authorList>
    </citation>
    <scope>NUCLEOTIDE SEQUENCE [LARGE SCALE GENOMIC DNA]</scope>
    <source>
        <strain>168</strain>
    </source>
</reference>
<gene>
    <name type="primary">ykvA</name>
    <name type="ordered locus">BSU13630</name>
</gene>
<organism>
    <name type="scientific">Bacillus subtilis (strain 168)</name>
    <dbReference type="NCBI Taxonomy" id="224308"/>
    <lineage>
        <taxon>Bacteria</taxon>
        <taxon>Bacillati</taxon>
        <taxon>Bacillota</taxon>
        <taxon>Bacilli</taxon>
        <taxon>Bacillales</taxon>
        <taxon>Bacillaceae</taxon>
        <taxon>Bacillus</taxon>
    </lineage>
</organism>